<reference key="1">
    <citation type="journal article" date="2004" name="Proc. Natl. Acad. Sci. U.S.A.">
        <title>The louse-borne human pathogen Bartonella quintana is a genomic derivative of the zoonotic agent Bartonella henselae.</title>
        <authorList>
            <person name="Alsmark U.C.M."/>
            <person name="Frank A.C."/>
            <person name="Karlberg E.O."/>
            <person name="Legault B.-A."/>
            <person name="Ardell D.H."/>
            <person name="Canbaeck B."/>
            <person name="Eriksson A.-S."/>
            <person name="Naeslund A.K."/>
            <person name="Handley S.A."/>
            <person name="Huvet M."/>
            <person name="La Scola B."/>
            <person name="Holmberg M."/>
            <person name="Andersson S.G.E."/>
        </authorList>
    </citation>
    <scope>NUCLEOTIDE SEQUENCE [LARGE SCALE GENOMIC DNA]</scope>
    <source>
        <strain>ATCC 49882 / DSM 28221 / CCUG 30454 / Houston 1</strain>
    </source>
</reference>
<proteinExistence type="inferred from homology"/>
<keyword id="KW-0687">Ribonucleoprotein</keyword>
<keyword id="KW-0689">Ribosomal protein</keyword>
<keyword id="KW-0694">RNA-binding</keyword>
<keyword id="KW-0699">rRNA-binding</keyword>
<feature type="chain" id="PRO_0000270637" description="Large ribosomal subunit protein bL21">
    <location>
        <begin position="1"/>
        <end position="158"/>
    </location>
</feature>
<feature type="region of interest" description="Disordered" evidence="2">
    <location>
        <begin position="127"/>
        <end position="158"/>
    </location>
</feature>
<feature type="compositionally biased region" description="Low complexity" evidence="2">
    <location>
        <begin position="131"/>
        <end position="158"/>
    </location>
</feature>
<protein>
    <recommendedName>
        <fullName evidence="1">Large ribosomal subunit protein bL21</fullName>
    </recommendedName>
    <alternativeName>
        <fullName evidence="3">50S ribosomal protein L21</fullName>
    </alternativeName>
</protein>
<sequence length="158" mass="17159">MFAVIKTGGKQYRVVANQVVRVEKIIGNAGDVVEFNDILMAGQEDNAIIGAPVVRDALVTAEIIEQARARKVIAFKKRRRQNSKRTRGHRQEVTTLRILEILTGGLKPKKAVAKSIKEEAAVLKATTQETKSAASVKKAAKKSAPQKQAAVASNSKED</sequence>
<name>RL21_BARHE</name>
<gene>
    <name evidence="1" type="primary">rplU</name>
    <name type="ordered locus">BH01390</name>
</gene>
<evidence type="ECO:0000255" key="1">
    <source>
        <dbReference type="HAMAP-Rule" id="MF_01363"/>
    </source>
</evidence>
<evidence type="ECO:0000256" key="2">
    <source>
        <dbReference type="SAM" id="MobiDB-lite"/>
    </source>
</evidence>
<evidence type="ECO:0000305" key="3"/>
<dbReference type="EMBL" id="BX897699">
    <property type="protein sequence ID" value="CAF26952.1"/>
    <property type="molecule type" value="Genomic_DNA"/>
</dbReference>
<dbReference type="RefSeq" id="WP_011180093.1">
    <property type="nucleotide sequence ID" value="NZ_LRIJ02000001.1"/>
</dbReference>
<dbReference type="SMR" id="Q6G508"/>
<dbReference type="PaxDb" id="283166-BH01390"/>
<dbReference type="EnsemblBacteria" id="CAF26952">
    <property type="protein sequence ID" value="CAF26952"/>
    <property type="gene ID" value="BH01390"/>
</dbReference>
<dbReference type="GeneID" id="92986424"/>
<dbReference type="KEGG" id="bhe:BH01390"/>
<dbReference type="eggNOG" id="COG0261">
    <property type="taxonomic scope" value="Bacteria"/>
</dbReference>
<dbReference type="OrthoDB" id="9813334at2"/>
<dbReference type="Proteomes" id="UP000000421">
    <property type="component" value="Chromosome"/>
</dbReference>
<dbReference type="GO" id="GO:0005737">
    <property type="term" value="C:cytoplasm"/>
    <property type="evidence" value="ECO:0007669"/>
    <property type="project" value="UniProtKB-ARBA"/>
</dbReference>
<dbReference type="GO" id="GO:1990904">
    <property type="term" value="C:ribonucleoprotein complex"/>
    <property type="evidence" value="ECO:0007669"/>
    <property type="project" value="UniProtKB-KW"/>
</dbReference>
<dbReference type="GO" id="GO:0005840">
    <property type="term" value="C:ribosome"/>
    <property type="evidence" value="ECO:0007669"/>
    <property type="project" value="UniProtKB-KW"/>
</dbReference>
<dbReference type="GO" id="GO:0019843">
    <property type="term" value="F:rRNA binding"/>
    <property type="evidence" value="ECO:0007669"/>
    <property type="project" value="UniProtKB-UniRule"/>
</dbReference>
<dbReference type="GO" id="GO:0003735">
    <property type="term" value="F:structural constituent of ribosome"/>
    <property type="evidence" value="ECO:0007669"/>
    <property type="project" value="InterPro"/>
</dbReference>
<dbReference type="GO" id="GO:0006412">
    <property type="term" value="P:translation"/>
    <property type="evidence" value="ECO:0007669"/>
    <property type="project" value="UniProtKB-UniRule"/>
</dbReference>
<dbReference type="HAMAP" id="MF_01363">
    <property type="entry name" value="Ribosomal_bL21"/>
    <property type="match status" value="1"/>
</dbReference>
<dbReference type="InterPro" id="IPR028909">
    <property type="entry name" value="bL21-like"/>
</dbReference>
<dbReference type="InterPro" id="IPR036164">
    <property type="entry name" value="bL21-like_sf"/>
</dbReference>
<dbReference type="InterPro" id="IPR001787">
    <property type="entry name" value="Ribosomal_bL21"/>
</dbReference>
<dbReference type="NCBIfam" id="TIGR00061">
    <property type="entry name" value="L21"/>
    <property type="match status" value="1"/>
</dbReference>
<dbReference type="PANTHER" id="PTHR21349">
    <property type="entry name" value="50S RIBOSOMAL PROTEIN L21"/>
    <property type="match status" value="1"/>
</dbReference>
<dbReference type="PANTHER" id="PTHR21349:SF0">
    <property type="entry name" value="LARGE RIBOSOMAL SUBUNIT PROTEIN BL21M"/>
    <property type="match status" value="1"/>
</dbReference>
<dbReference type="Pfam" id="PF00829">
    <property type="entry name" value="Ribosomal_L21p"/>
    <property type="match status" value="1"/>
</dbReference>
<dbReference type="SUPFAM" id="SSF141091">
    <property type="entry name" value="L21p-like"/>
    <property type="match status" value="1"/>
</dbReference>
<accession>Q6G508</accession>
<comment type="function">
    <text evidence="1">This protein binds to 23S rRNA in the presence of protein L20.</text>
</comment>
<comment type="subunit">
    <text evidence="1">Part of the 50S ribosomal subunit. Contacts protein L20.</text>
</comment>
<comment type="similarity">
    <text evidence="1">Belongs to the bacterial ribosomal protein bL21 family.</text>
</comment>
<organism>
    <name type="scientific">Bartonella henselae (strain ATCC 49882 / DSM 28221 / CCUG 30454 / Houston 1)</name>
    <name type="common">Rochalimaea henselae</name>
    <dbReference type="NCBI Taxonomy" id="283166"/>
    <lineage>
        <taxon>Bacteria</taxon>
        <taxon>Pseudomonadati</taxon>
        <taxon>Pseudomonadota</taxon>
        <taxon>Alphaproteobacteria</taxon>
        <taxon>Hyphomicrobiales</taxon>
        <taxon>Bartonellaceae</taxon>
        <taxon>Bartonella</taxon>
    </lineage>
</organism>